<evidence type="ECO:0000255" key="1">
    <source>
        <dbReference type="HAMAP-Rule" id="MF_00251"/>
    </source>
</evidence>
<evidence type="ECO:0000305" key="2"/>
<comment type="similarity">
    <text evidence="1">Belongs to the bacterial ribosomal protein bL36 family.</text>
</comment>
<keyword id="KW-1185">Reference proteome</keyword>
<keyword id="KW-0687">Ribonucleoprotein</keyword>
<keyword id="KW-0689">Ribosomal protein</keyword>
<reference key="1">
    <citation type="submission" date="2008-07" db="EMBL/GenBank/DDBJ databases">
        <title>Complete sequence of Geobacter bemidjiensis BEM.</title>
        <authorList>
            <consortium name="US DOE Joint Genome Institute"/>
            <person name="Lucas S."/>
            <person name="Copeland A."/>
            <person name="Lapidus A."/>
            <person name="Glavina del Rio T."/>
            <person name="Dalin E."/>
            <person name="Tice H."/>
            <person name="Bruce D."/>
            <person name="Goodwin L."/>
            <person name="Pitluck S."/>
            <person name="Kiss H."/>
            <person name="Brettin T."/>
            <person name="Detter J.C."/>
            <person name="Han C."/>
            <person name="Kuske C.R."/>
            <person name="Schmutz J."/>
            <person name="Larimer F."/>
            <person name="Land M."/>
            <person name="Hauser L."/>
            <person name="Kyrpides N."/>
            <person name="Lykidis A."/>
            <person name="Lovley D."/>
            <person name="Richardson P."/>
        </authorList>
    </citation>
    <scope>NUCLEOTIDE SEQUENCE [LARGE SCALE GENOMIC DNA]</scope>
    <source>
        <strain>ATCC BAA-1014 / DSM 16622 / JCM 12645 / Bem</strain>
    </source>
</reference>
<name>RL36_CITBB</name>
<organism>
    <name type="scientific">Citrifermentans bemidjiense (strain ATCC BAA-1014 / DSM 16622 / JCM 12645 / Bem)</name>
    <name type="common">Geobacter bemidjiensis</name>
    <dbReference type="NCBI Taxonomy" id="404380"/>
    <lineage>
        <taxon>Bacteria</taxon>
        <taxon>Pseudomonadati</taxon>
        <taxon>Thermodesulfobacteriota</taxon>
        <taxon>Desulfuromonadia</taxon>
        <taxon>Geobacterales</taxon>
        <taxon>Geobacteraceae</taxon>
        <taxon>Citrifermentans</taxon>
    </lineage>
</organism>
<accession>B5EFS3</accession>
<dbReference type="EMBL" id="CP001124">
    <property type="protein sequence ID" value="ACH37977.1"/>
    <property type="molecule type" value="Genomic_DNA"/>
</dbReference>
<dbReference type="RefSeq" id="WP_012529389.1">
    <property type="nucleotide sequence ID" value="NC_011146.1"/>
</dbReference>
<dbReference type="SMR" id="B5EFS3"/>
<dbReference type="STRING" id="404380.Gbem_0956"/>
<dbReference type="KEGG" id="gbm:Gbem_0956"/>
<dbReference type="eggNOG" id="COG0257">
    <property type="taxonomic scope" value="Bacteria"/>
</dbReference>
<dbReference type="HOGENOM" id="CLU_135723_6_2_7"/>
<dbReference type="Proteomes" id="UP000008825">
    <property type="component" value="Chromosome"/>
</dbReference>
<dbReference type="GO" id="GO:0005737">
    <property type="term" value="C:cytoplasm"/>
    <property type="evidence" value="ECO:0007669"/>
    <property type="project" value="UniProtKB-ARBA"/>
</dbReference>
<dbReference type="GO" id="GO:1990904">
    <property type="term" value="C:ribonucleoprotein complex"/>
    <property type="evidence" value="ECO:0007669"/>
    <property type="project" value="UniProtKB-KW"/>
</dbReference>
<dbReference type="GO" id="GO:0005840">
    <property type="term" value="C:ribosome"/>
    <property type="evidence" value="ECO:0007669"/>
    <property type="project" value="UniProtKB-KW"/>
</dbReference>
<dbReference type="GO" id="GO:0003735">
    <property type="term" value="F:structural constituent of ribosome"/>
    <property type="evidence" value="ECO:0007669"/>
    <property type="project" value="InterPro"/>
</dbReference>
<dbReference type="GO" id="GO:0006412">
    <property type="term" value="P:translation"/>
    <property type="evidence" value="ECO:0007669"/>
    <property type="project" value="UniProtKB-UniRule"/>
</dbReference>
<dbReference type="HAMAP" id="MF_00251">
    <property type="entry name" value="Ribosomal_bL36"/>
    <property type="match status" value="1"/>
</dbReference>
<dbReference type="InterPro" id="IPR000473">
    <property type="entry name" value="Ribosomal_bL36"/>
</dbReference>
<dbReference type="InterPro" id="IPR035977">
    <property type="entry name" value="Ribosomal_bL36_sp"/>
</dbReference>
<dbReference type="NCBIfam" id="TIGR01022">
    <property type="entry name" value="rpmJ_bact"/>
    <property type="match status" value="1"/>
</dbReference>
<dbReference type="PANTHER" id="PTHR42888">
    <property type="entry name" value="50S RIBOSOMAL PROTEIN L36, CHLOROPLASTIC"/>
    <property type="match status" value="1"/>
</dbReference>
<dbReference type="PANTHER" id="PTHR42888:SF1">
    <property type="entry name" value="LARGE RIBOSOMAL SUBUNIT PROTEIN BL36C"/>
    <property type="match status" value="1"/>
</dbReference>
<dbReference type="Pfam" id="PF00444">
    <property type="entry name" value="Ribosomal_L36"/>
    <property type="match status" value="1"/>
</dbReference>
<dbReference type="SUPFAM" id="SSF57840">
    <property type="entry name" value="Ribosomal protein L36"/>
    <property type="match status" value="1"/>
</dbReference>
<dbReference type="PROSITE" id="PS00828">
    <property type="entry name" value="RIBOSOMAL_L36"/>
    <property type="match status" value="1"/>
</dbReference>
<gene>
    <name evidence="1" type="primary">rpmJ</name>
    <name type="ordered locus">Gbem_0956</name>
</gene>
<protein>
    <recommendedName>
        <fullName evidence="1">Large ribosomal subunit protein bL36</fullName>
    </recommendedName>
    <alternativeName>
        <fullName evidence="2">50S ribosomal protein L36</fullName>
    </alternativeName>
</protein>
<sequence>MKVRASVKKICVKCKIVKRKGIVRVICETPKHSQRQG</sequence>
<proteinExistence type="inferred from homology"/>
<feature type="chain" id="PRO_1000101029" description="Large ribosomal subunit protein bL36">
    <location>
        <begin position="1"/>
        <end position="37"/>
    </location>
</feature>